<sequence length="2803" mass="305485">MDGVAEFSEYVSETVDVPSPFDLLEPPTSGGFLKLSKPCCYIFPGGRGDSALFAVNGFNILVDGGSDRKSCFWKLVRHLDRIDSVLLTHIGADNLPGINGLLQRKVAELEEEQSQGSSSYSDWVKNLISPELGVVFFNVPEKLRLPDASRKAKRSIEEACLTLQHLNRLGIQAEPLYRVVSNTIEPLTLFHKMGVGRLDMYVLNPVKDSKEMQFLMQKWAGNSKAKTGIVLPNGKEAEISVPYLTSITALVVWLPANPTEKIVRVLFPGNAPQNKILEGLEKLRHLDFLRYPVATQKDLASGAVPTNLKPSKIKQRADSKESLKATTKTAVSKLAKREEVVEEGAKEARSELAKELAKTEKKAKESSEKPPEKPAKPERVKTESSEALKAEKRKLIKDKVGKKHLKEKISKLEEKKDKEKKEIKKERKELKKDEGRKEEKKDAKKEEKRKDTKPELKKISKPDLKPFTPEVRKTLYKAKVPGRVKIDRSRAIRGEKELSSEPQTPPAQKGTVPLPTISGHRELVLSSPEDLTQDFEEMKREERALLAEQRDTGLGDKPFPLDTAEEGPPSTAIQGTPPSVPGLGQEEHVMKEKELVPEVPEEQGSKDRGLDSGAETEEEKDTWEEKKQREAERLPDRTEAREESEPEVKEDVIEKAELEEMEEVHPSDEEEEDATKAEGFYQKHMQEPLKVTPRSREAFGGRELGLQGKAPEKETSLFLSSLTTPAGATEHVSYIQDETIPGYSETEQTISDEEIHDEPEERPAPPRFHTSTYDLPGPEGAGPFEASQPADSAVPATSGKVYGTPETELTYPTNIVAAPLAEEEHVSSATSITECDKLSSFATSVAEDQSVASLTAPQTEETGKSSLLLDTVTSIPSSRTEATQGLDYVPSAGTISPTSSLEEDKGFKSPPCEDFSVTGESEKRGEIIGKGLSGERAVEEEEEETANVEMSEKLCSQYGTPVFSAPGHALHPGEPALGEAEERCLSPDDSTVKMASPPPSGPPSATHTPFHQSPVEEKSEPQDFQEADSWGDTKRTPGVGKEDAAEETVKPGPEEGTLEKEEKVPPPRSPQAQEAPVNIDEGLTGCTIQLLPAQDKAIVFEIMEAGEPTGPILGAEALPGGLRTLPQEPGKPQKDEVLRYPDRSLSPEDAESLSVLSVPSPDTANQEPTPKSPCGLTEQYLHKDRWPEVSPEDTQSLSLSEESPSKETSLDVSSKQLSPESLGTLQFGELNLGKEEMGHLMQAEDTSHHTAPMSVPEPHAATASPPTDGTTRYSAQTDITDDSLDRKSPASSFSHSTPSGNGKYLPGAITSPDEHILTPDSSFSKSPESLPGPALEDIAIKWEDKVPGLKDRTSEQKKEPEPKDEVLQQKDKTLEHKEVVEPKDTAIYQKDEALHVKNEAVKQQDKALEQKGRDLEQKDTALEQKDKALEPKDKDLEEKDKALEQKDKIPEEKDKALEQKDTALEQKDKALEPKDKDLEQKDRVLEQKEKIPEEKDKALDQKVRSVEHKAPEDTVAEMKDRDLEQTDKAPEQKHQAQEQKDKVSEKKDQALEQKYWALGQKDEALEQNIQALEENHQTQEQESLVQEDKTRKPKMLEEKSPEKVKAMEEKLEALLEKTKALGLEESLVQEGRAREQEEKYWRGQDVVQEWQETSPTREEPAGEQKELAPAWEDTSPEQDNRYWRGREDVALEQDTYWRELSCERKVWFPHELDGQGARPHYTEERESTFLDEGPDDEQEVPLREHATRSPWASDFKDFQESSPQKGLEVERWLAESPVGLPPEEEDKLTRSPFEIISPPASPPEMVGQRVPSAPGQESPIPDPKLMPHMKNEPTTPSWLADIPPWVPKDRPLPPAPLSPAPGPPTPAPESHTPAPFSWGTAEYDSVVAAVQEGAAELEGGPYSPLGKDYRKAEGEREEEGRAEAPDKSSHSSKVPEASKSHATTEPEQTEPEQREPTPYPDERSFQYADIYEQMMLTGLGPACPTREPPLGAAGDWPPCLSTKEAAAGRNTSAEKELSSPISPKSLQSDTPTFSYAALAGPTVPPRPEPGPSMEPSLTPPAVPPRAPILSKGPSPPLNGNILSCSPDRRSPSPKESGRSHWDDSTSDSELEKGAREQPEKEAQSPSPPHPIPMGSPTLWPETEAHVSPPLDSHLGPARPSLDFPASAFGFSSLQPAPPQLPSPAEPRSAPCGSLAFSGDRALALAPGPPTRTRHDEYLEVTKAPSLDSSLPQLPSPSSPGAPLLSNLPRPASPALSEGSSSEATTPVISSVAERFSPSLEAAEQESGELDPGMEPAAHSLWDLTPLSPAPPASLDLALAPAPSLPGDMGDGILPCHLECSEAATEKPSPFQVPSEDCAANGPTETSPNPPGPAPAKAENEEAAACPAWERGAWPEGAERSSRPDTLLSPEQPVCPAGGSGGPPSSASPEVEAGPQGCATEPRPHRGELSPSFLNPPLPPSIDDRDLSTEEVRLVGRGGRRRVGGPGTTGGPCPVTDETPPTSASDSGSSQSDSDVPPETEECPSITAEAALDSDEDGDFLPVDKAGGVSGTHHPRPGHDPPPLPQPDPRPSPPRPDVCMADPEGLSSESGRVERLREKEKVQGRVGRRAPGKAKPASPARRLDLRGKRSPTPGKGPADRASRAPPRPRSTTSQVTPAEEKDGHSPMSKGLVNGLKAGPMALSSKGSSGAPVYVDLAYIPNHCSGKTADLDFFRRVRASYYVVSGNDPANGEPSRAVLDALLEGKAQWGENLQVTLIPTHDTEVTREWYQQTHEQQQQLNVLVLASSSTVVMQDESFPACKIEF</sequence>
<organism>
    <name type="scientific">Homo sapiens</name>
    <name type="common">Human</name>
    <dbReference type="NCBI Taxonomy" id="9606"/>
    <lineage>
        <taxon>Eukaryota</taxon>
        <taxon>Metazoa</taxon>
        <taxon>Chordata</taxon>
        <taxon>Craniata</taxon>
        <taxon>Vertebrata</taxon>
        <taxon>Euteleostomi</taxon>
        <taxon>Mammalia</taxon>
        <taxon>Eutheria</taxon>
        <taxon>Euarchontoglires</taxon>
        <taxon>Primates</taxon>
        <taxon>Haplorrhini</taxon>
        <taxon>Catarrhini</taxon>
        <taxon>Hominidae</taxon>
        <taxon>Homo</taxon>
    </lineage>
</organism>
<evidence type="ECO:0000250" key="1"/>
<evidence type="ECO:0000250" key="2">
    <source>
        <dbReference type="UniProtKB" id="P34926"/>
    </source>
</evidence>
<evidence type="ECO:0000250" key="3">
    <source>
        <dbReference type="UniProtKB" id="Q9QYR6"/>
    </source>
</evidence>
<evidence type="ECO:0000256" key="4">
    <source>
        <dbReference type="SAM" id="MobiDB-lite"/>
    </source>
</evidence>
<evidence type="ECO:0000269" key="5">
    <source>
    </source>
</evidence>
<evidence type="ECO:0000269" key="6">
    <source>
    </source>
</evidence>
<evidence type="ECO:0000305" key="7"/>
<evidence type="ECO:0007744" key="8">
    <source>
    </source>
</evidence>
<evidence type="ECO:0007744" key="9">
    <source>
    </source>
</evidence>
<evidence type="ECO:0007744" key="10">
    <source>
    </source>
</evidence>
<evidence type="ECO:0007744" key="11">
    <source>
    </source>
</evidence>
<evidence type="ECO:0007744" key="12">
    <source>
    </source>
</evidence>
<keyword id="KW-0025">Alternative splicing</keyword>
<keyword id="KW-0963">Cytoplasm</keyword>
<keyword id="KW-0206">Cytoskeleton</keyword>
<keyword id="KW-0493">Microtubule</keyword>
<keyword id="KW-0597">Phosphoprotein</keyword>
<keyword id="KW-1267">Proteomics identification</keyword>
<keyword id="KW-1185">Reference proteome</keyword>
<keyword id="KW-0677">Repeat</keyword>
<gene>
    <name type="primary">MAP1A</name>
    <name type="synonym">MAP1L</name>
</gene>
<comment type="function">
    <text>Structural protein involved in the filamentous cross-bridging between microtubules and other skeletal elements.</text>
</comment>
<comment type="subunit">
    <text evidence="2 3">3 different light chains, LC1 (a cleavage product of MAP1B), LC2 (a cleavage product of MAP1A) and LC3 (produced by one of the MAP1LC3 genes), can associate with the MAP1A or MAP1B heavy chains. Interacts with TIAM2. Interacts with guanylate kinase-like domain of DLG1, DLG2 and DLG4. Binds to CSNK1D (By similarity).</text>
</comment>
<comment type="subunit">
    <molecule>MAP1 light chain LC2</molecule>
    <text evidence="3">Interacts with ELAVL4.</text>
</comment>
<comment type="interaction">
    <interactant intactId="EBI-929047">
        <id>P78559</id>
    </interactant>
    <interactant intactId="EBI-529989">
        <id>Q9NRI5</id>
        <label>DISC1</label>
    </interactant>
    <organismsDiffer>false</organismsDiffer>
    <experiments>3</experiments>
</comment>
<comment type="interaction">
    <interactant intactId="EBI-929047">
        <id>P78559</id>
    </interactant>
    <interactant intactId="EBI-1752330">
        <id>Q9BYB0</id>
        <label>SHANK3</label>
    </interactant>
    <organismsDiffer>false</organismsDiffer>
    <experiments>2</experiments>
</comment>
<comment type="subcellular location">
    <subcellularLocation>
        <location evidence="7">Cytoplasm</location>
        <location evidence="7">Cytoskeleton</location>
    </subcellularLocation>
</comment>
<comment type="alternative products">
    <event type="alternative splicing"/>
    <isoform>
        <id>P78559-1</id>
        <name>1</name>
        <sequence type="displayed"/>
    </isoform>
    <isoform>
        <id>P78559-2</id>
        <name>2</name>
        <sequence type="described" ref="VSP_040240"/>
    </isoform>
</comment>
<comment type="tissue specificity">
    <text>Brain.</text>
</comment>
<comment type="domain">
    <text>The basic region containing the repeats may be responsible for the binding of MAP1A to microtubules.</text>
</comment>
<comment type="PTM">
    <text evidence="1">Phosphorylated by CSNK1D.</text>
</comment>
<comment type="PTM">
    <text evidence="5">LC2 is generated from MAP1A by proteolytic processing.</text>
</comment>
<comment type="similarity">
    <text evidence="7">Belongs to the MAP1 family.</text>
</comment>
<proteinExistence type="evidence at protein level"/>
<protein>
    <recommendedName>
        <fullName>Microtubule-associated protein 1A</fullName>
        <shortName>MAP-1A</shortName>
    </recommendedName>
    <alternativeName>
        <fullName>Proliferation-related protein p80</fullName>
    </alternativeName>
    <component>
        <recommendedName>
            <fullName>MAP1A heavy chain</fullName>
        </recommendedName>
    </component>
    <component>
        <recommendedName>
            <fullName>MAP1 light chain LC2</fullName>
        </recommendedName>
    </component>
</protein>
<dbReference type="EMBL" id="U38291">
    <property type="protein sequence ID" value="AAB41132.1"/>
    <property type="molecule type" value="Genomic_DNA"/>
</dbReference>
<dbReference type="EMBL" id="U38292">
    <property type="protein sequence ID" value="AAB41133.1"/>
    <property type="molecule type" value="mRNA"/>
</dbReference>
<dbReference type="EMBL" id="AC019011">
    <property type="status" value="NOT_ANNOTATED_CDS"/>
    <property type="molecule type" value="Genomic_DNA"/>
</dbReference>
<dbReference type="EMBL" id="AF200415">
    <property type="protein sequence ID" value="AAF08305.2"/>
    <property type="molecule type" value="mRNA"/>
</dbReference>
<dbReference type="EMBL" id="U80458">
    <property type="protein sequence ID" value="AAD00355.1"/>
    <property type="molecule type" value="mRNA"/>
</dbReference>
<dbReference type="EMBL" id="Z47038">
    <property type="protein sequence ID" value="CAA87104.1"/>
    <property type="molecule type" value="Genomic_DNA"/>
</dbReference>
<dbReference type="EMBL" id="U14577">
    <property type="protein sequence ID" value="AAA81362.1"/>
    <property type="molecule type" value="mRNA"/>
</dbReference>
<dbReference type="CCDS" id="CCDS42031.1">
    <molecule id="P78559-1"/>
</dbReference>
<dbReference type="PIR" id="I38857">
    <property type="entry name" value="I38857"/>
</dbReference>
<dbReference type="RefSeq" id="NP_002364.5">
    <molecule id="P78559-1"/>
    <property type="nucleotide sequence ID" value="NM_002373.5"/>
</dbReference>
<dbReference type="SMR" id="P78559"/>
<dbReference type="BioGRID" id="110303">
    <property type="interactions" value="95"/>
</dbReference>
<dbReference type="DIP" id="DIP-36377N"/>
<dbReference type="FunCoup" id="P78559">
    <property type="interactions" value="560"/>
</dbReference>
<dbReference type="IntAct" id="P78559">
    <property type="interactions" value="55"/>
</dbReference>
<dbReference type="MINT" id="P78559"/>
<dbReference type="STRING" id="9606.ENSP00000300231"/>
<dbReference type="DrugBank" id="DB13318">
    <property type="generic name" value="Demecolcine"/>
</dbReference>
<dbReference type="DrugBank" id="DB01196">
    <property type="generic name" value="Estramustine"/>
</dbReference>
<dbReference type="CarbonylDB" id="P78559"/>
<dbReference type="GlyCosmos" id="P78559">
    <property type="glycosylation" value="5 sites, 1 glycan"/>
</dbReference>
<dbReference type="GlyGen" id="P78559">
    <property type="glycosylation" value="9 sites, 1 O-linked glycan (5 sites)"/>
</dbReference>
<dbReference type="iPTMnet" id="P78559"/>
<dbReference type="MetOSite" id="P78559"/>
<dbReference type="PhosphoSitePlus" id="P78559"/>
<dbReference type="SwissPalm" id="P78559"/>
<dbReference type="BioMuta" id="MAP1A"/>
<dbReference type="DMDM" id="313104325"/>
<dbReference type="jPOST" id="P78559"/>
<dbReference type="MassIVE" id="P78559"/>
<dbReference type="PaxDb" id="9606-ENSP00000300231"/>
<dbReference type="PeptideAtlas" id="P78559"/>
<dbReference type="ProteomicsDB" id="57652">
    <molecule id="P78559-1"/>
</dbReference>
<dbReference type="ProteomicsDB" id="57653">
    <molecule id="P78559-2"/>
</dbReference>
<dbReference type="Pumba" id="P78559"/>
<dbReference type="Antibodypedia" id="6277">
    <property type="antibodies" value="128 antibodies from 24 providers"/>
</dbReference>
<dbReference type="DNASU" id="4130"/>
<dbReference type="Ensembl" id="ENST00000300231.6">
    <molecule id="P78559-1"/>
    <property type="protein sequence ID" value="ENSP00000300231.5"/>
    <property type="gene ID" value="ENSG00000166963.13"/>
</dbReference>
<dbReference type="GeneID" id="4130"/>
<dbReference type="KEGG" id="hsa:4130"/>
<dbReference type="MANE-Select" id="ENST00000300231.6">
    <property type="protein sequence ID" value="ENSP00000300231.5"/>
    <property type="RefSeq nucleotide sequence ID" value="NM_002373.6"/>
    <property type="RefSeq protein sequence ID" value="NP_002364.5"/>
</dbReference>
<dbReference type="UCSC" id="uc001zrt.4">
    <molecule id="P78559-1"/>
    <property type="organism name" value="human"/>
</dbReference>
<dbReference type="AGR" id="HGNC:6835"/>
<dbReference type="CTD" id="4130"/>
<dbReference type="DisGeNET" id="4130"/>
<dbReference type="GeneCards" id="MAP1A"/>
<dbReference type="HGNC" id="HGNC:6835">
    <property type="gene designation" value="MAP1A"/>
</dbReference>
<dbReference type="HPA" id="ENSG00000166963">
    <property type="expression patterns" value="Tissue enriched (brain)"/>
</dbReference>
<dbReference type="MIM" id="600178">
    <property type="type" value="gene"/>
</dbReference>
<dbReference type="neXtProt" id="NX_P78559"/>
<dbReference type="OpenTargets" id="ENSG00000166963"/>
<dbReference type="VEuPathDB" id="HostDB:ENSG00000166963"/>
<dbReference type="eggNOG" id="KOG3592">
    <property type="taxonomic scope" value="Eukaryota"/>
</dbReference>
<dbReference type="GeneTree" id="ENSGT00940000158701"/>
<dbReference type="InParanoid" id="P78559"/>
<dbReference type="OrthoDB" id="5371837at2759"/>
<dbReference type="PAN-GO" id="P78559">
    <property type="GO annotations" value="12 GO annotations based on evolutionary models"/>
</dbReference>
<dbReference type="PhylomeDB" id="P78559"/>
<dbReference type="TreeFam" id="TF350229"/>
<dbReference type="PathwayCommons" id="P78559"/>
<dbReference type="SignaLink" id="P78559"/>
<dbReference type="SIGNOR" id="P78559"/>
<dbReference type="BioGRID-ORCS" id="4130">
    <property type="hits" value="16 hits in 1161 CRISPR screens"/>
</dbReference>
<dbReference type="CD-CODE" id="8C2F96ED">
    <property type="entry name" value="Centrosome"/>
</dbReference>
<dbReference type="CD-CODE" id="FB4E32DD">
    <property type="entry name" value="Presynaptic clusters and postsynaptic densities"/>
</dbReference>
<dbReference type="ChiTaRS" id="MAP1A">
    <property type="organism name" value="human"/>
</dbReference>
<dbReference type="GeneWiki" id="MAP1A"/>
<dbReference type="GenomeRNAi" id="4130"/>
<dbReference type="Pharos" id="P78559">
    <property type="development level" value="Tbio"/>
</dbReference>
<dbReference type="PRO" id="PR:P78559"/>
<dbReference type="Proteomes" id="UP000005640">
    <property type="component" value="Chromosome 15"/>
</dbReference>
<dbReference type="RNAct" id="P78559">
    <property type="molecule type" value="protein"/>
</dbReference>
<dbReference type="Bgee" id="ENSG00000166963">
    <property type="expression patterns" value="Expressed in lateral nuclear group of thalamus and 192 other cell types or tissues"/>
</dbReference>
<dbReference type="ExpressionAtlas" id="P78559">
    <property type="expression patterns" value="baseline and differential"/>
</dbReference>
<dbReference type="GO" id="GO:0030424">
    <property type="term" value="C:axon"/>
    <property type="evidence" value="ECO:0000250"/>
    <property type="project" value="ARUK-UCL"/>
</dbReference>
<dbReference type="GO" id="GO:1904115">
    <property type="term" value="C:axon cytoplasm"/>
    <property type="evidence" value="ECO:0007669"/>
    <property type="project" value="GOC"/>
</dbReference>
<dbReference type="GO" id="GO:0043194">
    <property type="term" value="C:axon initial segment"/>
    <property type="evidence" value="ECO:0000250"/>
    <property type="project" value="ARUK-UCL"/>
</dbReference>
<dbReference type="GO" id="GO:0005737">
    <property type="term" value="C:cytoplasm"/>
    <property type="evidence" value="ECO:0000250"/>
    <property type="project" value="ARUK-UCL"/>
</dbReference>
<dbReference type="GO" id="GO:0005829">
    <property type="term" value="C:cytosol"/>
    <property type="evidence" value="ECO:0000318"/>
    <property type="project" value="GO_Central"/>
</dbReference>
<dbReference type="GO" id="GO:0030425">
    <property type="term" value="C:dendrite"/>
    <property type="evidence" value="ECO:0000250"/>
    <property type="project" value="ARUK-UCL"/>
</dbReference>
<dbReference type="GO" id="GO:0044307">
    <property type="term" value="C:dendritic branch"/>
    <property type="evidence" value="ECO:0000250"/>
    <property type="project" value="ARUK-UCL"/>
</dbReference>
<dbReference type="GO" id="GO:1901588">
    <property type="term" value="C:dendritic microtubule"/>
    <property type="evidence" value="ECO:0000250"/>
    <property type="project" value="ARUK-UCL"/>
</dbReference>
<dbReference type="GO" id="GO:0043198">
    <property type="term" value="C:dendritic shaft"/>
    <property type="evidence" value="ECO:0000250"/>
    <property type="project" value="ARUK-UCL"/>
</dbReference>
<dbReference type="GO" id="GO:0005874">
    <property type="term" value="C:microtubule"/>
    <property type="evidence" value="ECO:0000318"/>
    <property type="project" value="GO_Central"/>
</dbReference>
<dbReference type="GO" id="GO:0005875">
    <property type="term" value="C:microtubule associated complex"/>
    <property type="evidence" value="ECO:0000318"/>
    <property type="project" value="GO_Central"/>
</dbReference>
<dbReference type="GO" id="GO:0043005">
    <property type="term" value="C:neuron projection"/>
    <property type="evidence" value="ECO:0000250"/>
    <property type="project" value="ARUK-UCL"/>
</dbReference>
<dbReference type="GO" id="GO:0043025">
    <property type="term" value="C:neuronal cell body"/>
    <property type="evidence" value="ECO:0000250"/>
    <property type="project" value="ARUK-UCL"/>
</dbReference>
<dbReference type="GO" id="GO:0150001">
    <property type="term" value="C:primary dendrite"/>
    <property type="evidence" value="ECO:0000250"/>
    <property type="project" value="ARUK-UCL"/>
</dbReference>
<dbReference type="GO" id="GO:0045202">
    <property type="term" value="C:synapse"/>
    <property type="evidence" value="ECO:0000318"/>
    <property type="project" value="GO_Central"/>
</dbReference>
<dbReference type="GO" id="GO:0003779">
    <property type="term" value="F:actin binding"/>
    <property type="evidence" value="ECO:0000250"/>
    <property type="project" value="ARUK-UCL"/>
</dbReference>
<dbReference type="GO" id="GO:0008093">
    <property type="term" value="F:cytoskeletal anchor activity"/>
    <property type="evidence" value="ECO:0000250"/>
    <property type="project" value="ARUK-UCL"/>
</dbReference>
<dbReference type="GO" id="GO:0008017">
    <property type="term" value="F:microtubule binding"/>
    <property type="evidence" value="ECO:0000250"/>
    <property type="project" value="ARUK-UCL"/>
</dbReference>
<dbReference type="GO" id="GO:0005198">
    <property type="term" value="F:structural molecule activity"/>
    <property type="evidence" value="ECO:0000303"/>
    <property type="project" value="ProtInc"/>
</dbReference>
<dbReference type="GO" id="GO:0048156">
    <property type="term" value="F:tau protein binding"/>
    <property type="evidence" value="ECO:0000303"/>
    <property type="project" value="ARUK-UCL"/>
</dbReference>
<dbReference type="GO" id="GO:0015631">
    <property type="term" value="F:tubulin binding"/>
    <property type="evidence" value="ECO:0000250"/>
    <property type="project" value="ARUK-UCL"/>
</dbReference>
<dbReference type="GO" id="GO:0099641">
    <property type="term" value="P:anterograde axonal protein transport"/>
    <property type="evidence" value="ECO:0000250"/>
    <property type="project" value="ARUK-UCL"/>
</dbReference>
<dbReference type="GO" id="GO:0008306">
    <property type="term" value="P:associative learning"/>
    <property type="evidence" value="ECO:0000250"/>
    <property type="project" value="ARUK-UCL"/>
</dbReference>
<dbReference type="GO" id="GO:0007409">
    <property type="term" value="P:axonogenesis"/>
    <property type="evidence" value="ECO:0000318"/>
    <property type="project" value="GO_Central"/>
</dbReference>
<dbReference type="GO" id="GO:0016358">
    <property type="term" value="P:dendrite development"/>
    <property type="evidence" value="ECO:0000318"/>
    <property type="project" value="GO_Central"/>
</dbReference>
<dbReference type="GO" id="GO:0007613">
    <property type="term" value="P:memory"/>
    <property type="evidence" value="ECO:0000250"/>
    <property type="project" value="ARUK-UCL"/>
</dbReference>
<dbReference type="GO" id="GO:0000226">
    <property type="term" value="P:microtubule cytoskeleton organization"/>
    <property type="evidence" value="ECO:0000250"/>
    <property type="project" value="ARUK-UCL"/>
</dbReference>
<dbReference type="GO" id="GO:0032435">
    <property type="term" value="P:negative regulation of proteasomal ubiquitin-dependent protein catabolic process"/>
    <property type="evidence" value="ECO:0000250"/>
    <property type="project" value="ARUK-UCL"/>
</dbReference>
<dbReference type="GO" id="GO:1902817">
    <property type="term" value="P:negative regulation of protein localization to microtubule"/>
    <property type="evidence" value="ECO:0000250"/>
    <property type="project" value="ARUK-UCL"/>
</dbReference>
<dbReference type="GO" id="GO:0070050">
    <property type="term" value="P:neuron cellular homeostasis"/>
    <property type="evidence" value="ECO:0000250"/>
    <property type="project" value="ARUK-UCL"/>
</dbReference>
<dbReference type="GO" id="GO:1990535">
    <property type="term" value="P:neuron projection maintenance"/>
    <property type="evidence" value="ECO:0000250"/>
    <property type="project" value="ARUK-UCL"/>
</dbReference>
<dbReference type="GO" id="GO:1903829">
    <property type="term" value="P:positive regulation of protein localization"/>
    <property type="evidence" value="ECO:0000250"/>
    <property type="project" value="ARUK-UCL"/>
</dbReference>
<dbReference type="GO" id="GO:2000010">
    <property type="term" value="P:positive regulation of protein localization to cell surface"/>
    <property type="evidence" value="ECO:0000250"/>
    <property type="project" value="ARUK-UCL"/>
</dbReference>
<dbReference type="GO" id="GO:0031114">
    <property type="term" value="P:regulation of microtubule depolymerization"/>
    <property type="evidence" value="ECO:0000318"/>
    <property type="project" value="GO_Central"/>
</dbReference>
<dbReference type="GO" id="GO:0048167">
    <property type="term" value="P:regulation of synaptic plasticity"/>
    <property type="evidence" value="ECO:0000250"/>
    <property type="project" value="ARUK-UCL"/>
</dbReference>
<dbReference type="GO" id="GO:0099642">
    <property type="term" value="P:retrograde axonal protein transport"/>
    <property type="evidence" value="ECO:0000250"/>
    <property type="project" value="ARUK-UCL"/>
</dbReference>
<dbReference type="GO" id="GO:0050882">
    <property type="term" value="P:voluntary musculoskeletal movement"/>
    <property type="evidence" value="ECO:0000250"/>
    <property type="project" value="ARUK-UCL"/>
</dbReference>
<dbReference type="InterPro" id="IPR026074">
    <property type="entry name" value="MAP1"/>
</dbReference>
<dbReference type="InterPro" id="IPR036866">
    <property type="entry name" value="RibonucZ/Hydroxyglut_hydro"/>
</dbReference>
<dbReference type="PANTHER" id="PTHR13843">
    <property type="entry name" value="MICROTUBULE-ASSOCIATED PROTEIN"/>
    <property type="match status" value="1"/>
</dbReference>
<dbReference type="PANTHER" id="PTHR13843:SF6">
    <property type="entry name" value="MICROTUBULE-ASSOCIATED PROTEIN 1A"/>
    <property type="match status" value="1"/>
</dbReference>
<dbReference type="Pfam" id="PF25281">
    <property type="entry name" value="MBL_MAP1B"/>
    <property type="match status" value="1"/>
</dbReference>
<dbReference type="SUPFAM" id="SSF56281">
    <property type="entry name" value="Metallo-hydrolase/oxidoreductase"/>
    <property type="match status" value="1"/>
</dbReference>
<reference key="1">
    <citation type="journal article" date="1996" name="Genomics">
        <title>Human microtubule-associated protein 1a (MAP1A) gene: genomic organization, cDNA sequence, and developmental- and tissue-specific expression.</title>
        <authorList>
            <person name="Fink J.K."/>
            <person name="Jones S.M."/>
            <person name="Esposito C."/>
            <person name="Wilkowski J."/>
        </authorList>
    </citation>
    <scope>NUCLEOTIDE SEQUENCE [GENOMIC DNA / MRNA]</scope>
    <scope>VARIANTS LEU-72; SER-335; THR-336; SER-353; SER-357; GLN-364; CYS-1650; SER-1690; PRO-1881; VAL-1912; ARG-1938 AND TYR-2214</scope>
</reference>
<reference key="2">
    <citation type="journal article" date="2006" name="Nature">
        <title>Analysis of the DNA sequence and duplication history of human chromosome 15.</title>
        <authorList>
            <person name="Zody M.C."/>
            <person name="Garber M."/>
            <person name="Sharpe T."/>
            <person name="Young S.K."/>
            <person name="Rowen L."/>
            <person name="O'Neill K."/>
            <person name="Whittaker C.A."/>
            <person name="Kamal M."/>
            <person name="Chang J.L."/>
            <person name="Cuomo C.A."/>
            <person name="Dewar K."/>
            <person name="FitzGerald M.G."/>
            <person name="Kodira C.D."/>
            <person name="Madan A."/>
            <person name="Qin S."/>
            <person name="Yang X."/>
            <person name="Abbasi N."/>
            <person name="Abouelleil A."/>
            <person name="Arachchi H.M."/>
            <person name="Baradarani L."/>
            <person name="Birditt B."/>
            <person name="Bloom S."/>
            <person name="Bloom T."/>
            <person name="Borowsky M.L."/>
            <person name="Burke J."/>
            <person name="Butler J."/>
            <person name="Cook A."/>
            <person name="DeArellano K."/>
            <person name="DeCaprio D."/>
            <person name="Dorris L. III"/>
            <person name="Dors M."/>
            <person name="Eichler E.E."/>
            <person name="Engels R."/>
            <person name="Fahey J."/>
            <person name="Fleetwood P."/>
            <person name="Friedman C."/>
            <person name="Gearin G."/>
            <person name="Hall J.L."/>
            <person name="Hensley G."/>
            <person name="Johnson E."/>
            <person name="Jones C."/>
            <person name="Kamat A."/>
            <person name="Kaur A."/>
            <person name="Locke D.P."/>
            <person name="Madan A."/>
            <person name="Munson G."/>
            <person name="Jaffe D.B."/>
            <person name="Lui A."/>
            <person name="Macdonald P."/>
            <person name="Mauceli E."/>
            <person name="Naylor J.W."/>
            <person name="Nesbitt R."/>
            <person name="Nicol R."/>
            <person name="O'Leary S.B."/>
            <person name="Ratcliffe A."/>
            <person name="Rounsley S."/>
            <person name="She X."/>
            <person name="Sneddon K.M.B."/>
            <person name="Stewart S."/>
            <person name="Sougnez C."/>
            <person name="Stone S.M."/>
            <person name="Topham K."/>
            <person name="Vincent D."/>
            <person name="Wang S."/>
            <person name="Zimmer A.R."/>
            <person name="Birren B.W."/>
            <person name="Hood L."/>
            <person name="Lander E.S."/>
            <person name="Nusbaum C."/>
        </authorList>
    </citation>
    <scope>NUCLEOTIDE SEQUENCE [LARGE SCALE GENOMIC DNA]</scope>
</reference>
<reference key="3">
    <citation type="submission" date="2001-02" db="EMBL/GenBank/DDBJ databases">
        <title>Identification of a novel protein (P80) in ovarian carcinoma cells.</title>
        <authorList>
            <person name="Chen Z.C."/>
            <person name="Fadiel A."/>
            <person name="Naftolin F."/>
        </authorList>
    </citation>
    <scope>NUCLEOTIDE SEQUENCE [MRNA] OF 1-1825</scope>
    <source>
        <tissue>Ovarian carcinoma</tissue>
    </source>
</reference>
<reference key="4">
    <citation type="submission" date="1996-11" db="EMBL/GenBank/DDBJ databases">
        <title>Microtubule associated protein 1A (MAP1A) in human brain -- DNA sequence and physiological role.</title>
        <authorList>
            <person name="Ohtani K."/>
            <person name="Rutherford T."/>
            <person name="Sakamoto H."/>
            <person name="Naftolin F."/>
        </authorList>
    </citation>
    <scope>NUCLEOTIDE SEQUENCE [MRNA] OF 78-1687</scope>
    <source>
        <tissue>Brain</tissue>
    </source>
</reference>
<reference key="5">
    <citation type="submission" date="1996-01" db="EMBL/GenBank/DDBJ databases">
        <authorList>
            <person name="Chiannilkulchai N."/>
            <person name="Pasturaud P."/>
            <person name="Richard I."/>
            <person name="Auffray C."/>
            <person name="Beckmann J.S."/>
        </authorList>
    </citation>
    <scope>NUCLEOTIDE SEQUENCE [GENOMIC DNA] OF 134-419</scope>
    <source>
        <tissue>Fetal muscle</tissue>
    </source>
</reference>
<reference key="6">
    <citation type="journal article" date="1995" name="J. Neurosci. Res.">
        <title>Brain-specific expression of human microtubule-associated protein 1A (MAP1A) gene and its assignment to human chromosome 15.</title>
        <authorList>
            <person name="Fukuyama R."/>
            <person name="Rapoport S.I."/>
        </authorList>
    </citation>
    <scope>NUCLEOTIDE SEQUENCE [MRNA] OF 1607-1883</scope>
    <source>
        <tissue>Brain</tissue>
    </source>
</reference>
<reference key="7">
    <citation type="journal article" date="2004" name="Anal. Chem.">
        <title>Robust phosphoproteomic profiling of tyrosine phosphorylation sites from human T cells using immobilized metal affinity chromatography and tandem mass spectrometry.</title>
        <authorList>
            <person name="Brill L.M."/>
            <person name="Salomon A.R."/>
            <person name="Ficarro S.B."/>
            <person name="Mukherji M."/>
            <person name="Stettler-Gill M."/>
            <person name="Peters E.C."/>
        </authorList>
    </citation>
    <scope>PHOSPHORYLATION [LARGE SCALE ANALYSIS] AT SER-2022</scope>
    <scope>IDENTIFICATION BY MASS SPECTROMETRY [LARGE SCALE ANALYSIS]</scope>
    <source>
        <tissue>Leukemic T-cell</tissue>
    </source>
</reference>
<reference key="8">
    <citation type="journal article" date="2005" name="Nat. Biotechnol.">
        <title>Immunoaffinity profiling of tyrosine phosphorylation in cancer cells.</title>
        <authorList>
            <person name="Rush J."/>
            <person name="Moritz A."/>
            <person name="Lee K.A."/>
            <person name="Guo A."/>
            <person name="Goss V.L."/>
            <person name="Spek E.J."/>
            <person name="Zhang H."/>
            <person name="Zha X.-M."/>
            <person name="Polakiewicz R.D."/>
            <person name="Comb M.J."/>
        </authorList>
    </citation>
    <scope>IDENTIFICATION BY MASS SPECTROMETRY [LARGE SCALE ANALYSIS]</scope>
</reference>
<reference key="9">
    <citation type="journal article" date="2006" name="Cell">
        <title>Global, in vivo, and site-specific phosphorylation dynamics in signaling networks.</title>
        <authorList>
            <person name="Olsen J.V."/>
            <person name="Blagoev B."/>
            <person name="Gnad F."/>
            <person name="Macek B."/>
            <person name="Kumar C."/>
            <person name="Mortensen P."/>
            <person name="Mann M."/>
        </authorList>
    </citation>
    <scope>PHOSPHORYLATION [LARGE SCALE ANALYSIS] AT SER-612; THR-616; SER-1326; SER-1329 AND SER-2022</scope>
    <scope>IDENTIFICATION BY MASS SPECTROMETRY [LARGE SCALE ANALYSIS]</scope>
    <source>
        <tissue>Cervix carcinoma</tissue>
    </source>
</reference>
<reference key="10">
    <citation type="journal article" date="2007" name="Science">
        <title>ATM and ATR substrate analysis reveals extensive protein networks responsive to DNA damage.</title>
        <authorList>
            <person name="Matsuoka S."/>
            <person name="Ballif B.A."/>
            <person name="Smogorzewska A."/>
            <person name="McDonald E.R. III"/>
            <person name="Hurov K.E."/>
            <person name="Luo J."/>
            <person name="Bakalarski C.E."/>
            <person name="Zhao Z."/>
            <person name="Solimini N."/>
            <person name="Lerenthal Y."/>
            <person name="Shiloh Y."/>
            <person name="Gygi S.P."/>
            <person name="Elledge S.J."/>
        </authorList>
    </citation>
    <scope>IDENTIFICATION BY MASS SPECTROMETRY [LARGE SCALE ANALYSIS]</scope>
    <source>
        <tissue>Embryonic kidney</tissue>
    </source>
</reference>
<reference key="11">
    <citation type="journal article" date="2008" name="Biochem. J.">
        <title>MAP1 structural organization in Drosophila: in vivo analysis of FUTSCH reveals heavy- and light-chain subunits generated by proteolytic processing at a conserved cleavage site.</title>
        <authorList>
            <person name="Zou B."/>
            <person name="Yan H."/>
            <person name="Kawasaki F."/>
            <person name="Ordway R.W."/>
        </authorList>
    </citation>
    <scope>CLEAVAGE SITE</scope>
</reference>
<reference key="12">
    <citation type="journal article" date="2009" name="Anal. Chem.">
        <title>Lys-N and trypsin cover complementary parts of the phosphoproteome in a refined SCX-based approach.</title>
        <authorList>
            <person name="Gauci S."/>
            <person name="Helbig A.O."/>
            <person name="Slijper M."/>
            <person name="Krijgsveld J."/>
            <person name="Heck A.J."/>
            <person name="Mohammed S."/>
        </authorList>
    </citation>
    <scope>IDENTIFICATION BY MASS SPECTROMETRY [LARGE SCALE ANALYSIS]</scope>
</reference>
<reference key="13">
    <citation type="journal article" date="2009" name="Sci. Signal.">
        <title>Quantitative phosphoproteomic analysis of T cell receptor signaling reveals system-wide modulation of protein-protein interactions.</title>
        <authorList>
            <person name="Mayya V."/>
            <person name="Lundgren D.H."/>
            <person name="Hwang S.-I."/>
            <person name="Rezaul K."/>
            <person name="Wu L."/>
            <person name="Eng J.K."/>
            <person name="Rodionov V."/>
            <person name="Han D.K."/>
        </authorList>
    </citation>
    <scope>PHOSPHORYLATION [LARGE SCALE ANALYSIS] AT SER-612; THR-616; SER-667; SER-896; SER-1069; SER-1160; SER-1218; SER-1654; SER-1675; SER-1776; SER-1791; SER-1797; SER-1801; SER-2022; SER-2104 AND SER-2449</scope>
    <scope>IDENTIFICATION BY MASS SPECTROMETRY [LARGE SCALE ANALYSIS]</scope>
    <source>
        <tissue>Leukemic T-cell</tissue>
    </source>
</reference>
<reference key="14">
    <citation type="journal article" date="2010" name="Sci. Signal.">
        <title>Quantitative phosphoproteomics reveals widespread full phosphorylation site occupancy during mitosis.</title>
        <authorList>
            <person name="Olsen J.V."/>
            <person name="Vermeulen M."/>
            <person name="Santamaria A."/>
            <person name="Kumar C."/>
            <person name="Miller M.L."/>
            <person name="Jensen L.J."/>
            <person name="Gnad F."/>
            <person name="Cox J."/>
            <person name="Jensen T.S."/>
            <person name="Nigg E.A."/>
            <person name="Brunak S."/>
            <person name="Mann M."/>
        </authorList>
    </citation>
    <scope>IDENTIFICATION BY MASS SPECTROMETRY [LARGE SCALE ANALYSIS]</scope>
    <source>
        <tissue>Cervix carcinoma</tissue>
    </source>
</reference>
<reference key="15">
    <citation type="journal article" date="2011" name="BMC Syst. Biol.">
        <title>Initial characterization of the human central proteome.</title>
        <authorList>
            <person name="Burkard T.R."/>
            <person name="Planyavsky M."/>
            <person name="Kaupe I."/>
            <person name="Breitwieser F.P."/>
            <person name="Buerckstuemmer T."/>
            <person name="Bennett K.L."/>
            <person name="Superti-Furga G."/>
            <person name="Colinge J."/>
        </authorList>
    </citation>
    <scope>IDENTIFICATION BY MASS SPECTROMETRY [LARGE SCALE ANALYSIS]</scope>
</reference>
<reference key="16">
    <citation type="journal article" date="2011" name="Sci. Signal.">
        <title>System-wide temporal characterization of the proteome and phosphoproteome of human embryonic stem cell differentiation.</title>
        <authorList>
            <person name="Rigbolt K.T."/>
            <person name="Prokhorova T.A."/>
            <person name="Akimov V."/>
            <person name="Henningsen J."/>
            <person name="Johansen P.T."/>
            <person name="Kratchmarova I."/>
            <person name="Kassem M."/>
            <person name="Mann M."/>
            <person name="Olsen J.V."/>
            <person name="Blagoev B."/>
        </authorList>
    </citation>
    <scope>PHOSPHORYLATION [LARGE SCALE ANALYSIS] AT SER-612 AND THR-616</scope>
    <scope>IDENTIFICATION BY MASS SPECTROMETRY [LARGE SCALE ANALYSIS]</scope>
</reference>
<reference key="17">
    <citation type="journal article" date="2013" name="J. Proteome Res.">
        <title>Toward a comprehensive characterization of a human cancer cell phosphoproteome.</title>
        <authorList>
            <person name="Zhou H."/>
            <person name="Di Palma S."/>
            <person name="Preisinger C."/>
            <person name="Peng M."/>
            <person name="Polat A.N."/>
            <person name="Heck A.J."/>
            <person name="Mohammed S."/>
        </authorList>
    </citation>
    <scope>PHOSPHORYLATION [LARGE SCALE ANALYSIS] AT SER-117; THR-504; SER-526; SER-527; SER-605; SER-612; THR-616; SER-644; SER-667; SER-787; SER-896; SER-909; SER-986; SER-1069; SER-1172; SER-1190; SER-1200; SER-1203; SER-1218; SER-1326; SER-1600; SER-1626; SER-1675; SER-1749; SER-1762; SER-1776; SER-1797; SER-1801; SER-1818; THR-1957; SER-2022; SER-2074; SER-2104; SER-2106; SER-2449; SER-2649 AND SER-2664</scope>
    <scope>IDENTIFICATION BY MASS SPECTROMETRY [LARGE SCALE ANALYSIS]</scope>
    <source>
        <tissue>Cervix carcinoma</tissue>
        <tissue>Erythroleukemia</tissue>
    </source>
</reference>
<reference key="18">
    <citation type="journal article" date="2014" name="J. Proteomics">
        <title>An enzyme assisted RP-RPLC approach for in-depth analysis of human liver phosphoproteome.</title>
        <authorList>
            <person name="Bian Y."/>
            <person name="Song C."/>
            <person name="Cheng K."/>
            <person name="Dong M."/>
            <person name="Wang F."/>
            <person name="Huang J."/>
            <person name="Sun D."/>
            <person name="Wang L."/>
            <person name="Ye M."/>
            <person name="Zou H."/>
        </authorList>
    </citation>
    <scope>IDENTIFICATION BY MASS SPECTROMETRY [LARGE SCALE ANALYSIS]</scope>
    <source>
        <tissue>Liver</tissue>
    </source>
</reference>
<name>MAP1A_HUMAN</name>
<accession>P78559</accession>
<accession>O95643</accession>
<accession>Q12973</accession>
<accession>Q15882</accession>
<accession>Q9UJT4</accession>
<feature type="chain" id="PRO_0000018600" description="Microtubule-associated protein 1A">
    <location>
        <begin position="1"/>
        <end position="2803"/>
    </location>
</feature>
<feature type="chain" id="PRO_0000418376" description="MAP1A heavy chain">
    <location>
        <begin position="1"/>
        <end position="2566"/>
    </location>
</feature>
<feature type="chain" id="PRO_0000018601" description="MAP1 light chain LC2">
    <location>
        <begin position="2567"/>
        <end position="2803"/>
    </location>
</feature>
<feature type="repeat" description="1">
    <location>
        <begin position="415"/>
        <end position="417"/>
    </location>
</feature>
<feature type="repeat" description="2">
    <location>
        <begin position="420"/>
        <end position="422"/>
    </location>
</feature>
<feature type="repeat" description="3">
    <location>
        <begin position="427"/>
        <end position="429"/>
    </location>
</feature>
<feature type="repeat" description="4">
    <location>
        <begin position="431"/>
        <end position="433"/>
    </location>
</feature>
<feature type="repeat" description="5">
    <location>
        <begin position="436"/>
        <end position="438"/>
    </location>
</feature>
<feature type="repeat" description="6">
    <location>
        <begin position="440"/>
        <end position="442"/>
    </location>
</feature>
<feature type="repeat" description="7">
    <location>
        <begin position="444"/>
        <end position="446"/>
    </location>
</feature>
<feature type="repeat" description="8">
    <location>
        <begin position="449"/>
        <end position="451"/>
    </location>
</feature>
<feature type="repeat" description="9">
    <location>
        <begin position="539"/>
        <end position="541"/>
    </location>
</feature>
<feature type="region of interest" description="Disordered" evidence="4">
    <location>
        <begin position="302"/>
        <end position="466"/>
    </location>
</feature>
<feature type="region of interest" description="9 X 3 AA repeats of K-K-[DE]">
    <location>
        <begin position="415"/>
        <end position="541"/>
    </location>
</feature>
<feature type="region of interest" description="Disordered" evidence="4">
    <location>
        <begin position="486"/>
        <end position="516"/>
    </location>
</feature>
<feature type="region of interest" description="Disordered" evidence="4">
    <location>
        <begin position="539"/>
        <end position="712"/>
    </location>
</feature>
<feature type="region of interest" description="Disordered" evidence="4">
    <location>
        <begin position="734"/>
        <end position="806"/>
    </location>
</feature>
<feature type="region of interest" description="Disordered" evidence="4">
    <location>
        <begin position="847"/>
        <end position="1080"/>
    </location>
</feature>
<feature type="region of interest" description="Disordered" evidence="4">
    <location>
        <begin position="1109"/>
        <end position="1548"/>
    </location>
</feature>
<feature type="region of interest" description="Disordered" evidence="4">
    <location>
        <begin position="1573"/>
        <end position="1605"/>
    </location>
</feature>
<feature type="region of interest" description="Disordered" evidence="4">
    <location>
        <begin position="1632"/>
        <end position="1684"/>
    </location>
</feature>
<feature type="region of interest" description="Disordered" evidence="4">
    <location>
        <begin position="1713"/>
        <end position="1879"/>
    </location>
</feature>
<feature type="region of interest" description="Disordered" evidence="4">
    <location>
        <begin position="1892"/>
        <end position="2673"/>
    </location>
</feature>
<feature type="compositionally biased region" description="Basic and acidic residues" evidence="4">
    <location>
        <begin position="335"/>
        <end position="390"/>
    </location>
</feature>
<feature type="compositionally biased region" description="Basic residues" evidence="4">
    <location>
        <begin position="391"/>
        <end position="406"/>
    </location>
</feature>
<feature type="compositionally biased region" description="Basic and acidic residues" evidence="4">
    <location>
        <begin position="407"/>
        <end position="464"/>
    </location>
</feature>
<feature type="compositionally biased region" description="Basic and acidic residues" evidence="4">
    <location>
        <begin position="486"/>
        <end position="499"/>
    </location>
</feature>
<feature type="compositionally biased region" description="Basic and acidic residues" evidence="4">
    <location>
        <begin position="539"/>
        <end position="554"/>
    </location>
</feature>
<feature type="compositionally biased region" description="Basic and acidic residues" evidence="4">
    <location>
        <begin position="585"/>
        <end position="596"/>
    </location>
</feature>
<feature type="compositionally biased region" description="Basic and acidic residues" evidence="4">
    <location>
        <begin position="623"/>
        <end position="667"/>
    </location>
</feature>
<feature type="compositionally biased region" description="Polar residues" evidence="4">
    <location>
        <begin position="847"/>
        <end position="860"/>
    </location>
</feature>
<feature type="compositionally biased region" description="Polar residues" evidence="4">
    <location>
        <begin position="871"/>
        <end position="883"/>
    </location>
</feature>
<feature type="compositionally biased region" description="Basic and acidic residues" evidence="4">
    <location>
        <begin position="1031"/>
        <end position="1065"/>
    </location>
</feature>
<feature type="compositionally biased region" description="Basic and acidic residues" evidence="4">
    <location>
        <begin position="1131"/>
        <end position="1146"/>
    </location>
</feature>
<feature type="compositionally biased region" description="Polar residues" evidence="4">
    <location>
        <begin position="1154"/>
        <end position="1169"/>
    </location>
</feature>
<feature type="compositionally biased region" description="Polar residues" evidence="4">
    <location>
        <begin position="1211"/>
        <end position="1224"/>
    </location>
</feature>
<feature type="compositionally biased region" description="Polar residues" evidence="4">
    <location>
        <begin position="1264"/>
        <end position="1278"/>
    </location>
</feature>
<feature type="compositionally biased region" description="Low complexity" evidence="4">
    <location>
        <begin position="1289"/>
        <end position="1299"/>
    </location>
</feature>
<feature type="compositionally biased region" description="Basic and acidic residues" evidence="4">
    <location>
        <begin position="1338"/>
        <end position="1548"/>
    </location>
</feature>
<feature type="compositionally biased region" description="Basic and acidic residues" evidence="4">
    <location>
        <begin position="1586"/>
        <end position="1605"/>
    </location>
</feature>
<feature type="compositionally biased region" description="Basic and acidic residues" evidence="4">
    <location>
        <begin position="1632"/>
        <end position="1642"/>
    </location>
</feature>
<feature type="compositionally biased region" description="Basic and acidic residues" evidence="4">
    <location>
        <begin position="1655"/>
        <end position="1666"/>
    </location>
</feature>
<feature type="compositionally biased region" description="Pro residues" evidence="4">
    <location>
        <begin position="1852"/>
        <end position="1867"/>
    </location>
</feature>
<feature type="compositionally biased region" description="Basic and acidic residues" evidence="4">
    <location>
        <begin position="1907"/>
        <end position="1929"/>
    </location>
</feature>
<feature type="compositionally biased region" description="Basic and acidic residues" evidence="4">
    <location>
        <begin position="1951"/>
        <end position="1964"/>
    </location>
</feature>
<feature type="compositionally biased region" description="Polar residues" evidence="4">
    <location>
        <begin position="2019"/>
        <end position="2033"/>
    </location>
</feature>
<feature type="compositionally biased region" description="Pro residues" evidence="4">
    <location>
        <begin position="2042"/>
        <end position="2066"/>
    </location>
</feature>
<feature type="compositionally biased region" description="Basic and acidic residues" evidence="4">
    <location>
        <begin position="2086"/>
        <end position="2122"/>
    </location>
</feature>
<feature type="compositionally biased region" description="Pro residues" evidence="4">
    <location>
        <begin position="2175"/>
        <end position="2184"/>
    </location>
</feature>
<feature type="compositionally biased region" description="Polar residues" evidence="4">
    <location>
        <begin position="2257"/>
        <end position="2268"/>
    </location>
</feature>
<feature type="compositionally biased region" description="Low complexity" evidence="4">
    <location>
        <begin position="2312"/>
        <end position="2325"/>
    </location>
</feature>
<feature type="compositionally biased region" description="Basic and acidic residues" evidence="4">
    <location>
        <begin position="2461"/>
        <end position="2473"/>
    </location>
</feature>
<feature type="compositionally biased region" description="Low complexity" evidence="4">
    <location>
        <begin position="2502"/>
        <end position="2514"/>
    </location>
</feature>
<feature type="compositionally biased region" description="Pro residues" evidence="4">
    <location>
        <begin position="2559"/>
        <end position="2575"/>
    </location>
</feature>
<feature type="compositionally biased region" description="Basic and acidic residues" evidence="4">
    <location>
        <begin position="2590"/>
        <end position="2602"/>
    </location>
</feature>
<feature type="modified residue" description="Phosphoserine" evidence="3">
    <location>
        <position position="114"/>
    </location>
</feature>
<feature type="modified residue" description="Phosphoserine" evidence="12">
    <location>
        <position position="117"/>
    </location>
</feature>
<feature type="modified residue" description="Phosphoserine" evidence="3">
    <location>
        <position position="118"/>
    </location>
</feature>
<feature type="modified residue" description="Phosphoserine" evidence="3">
    <location>
        <position position="121"/>
    </location>
</feature>
<feature type="modified residue" description="Phosphoserine" evidence="3">
    <location>
        <position position="155"/>
    </location>
</feature>
<feature type="modified residue" description="Phosphotyrosine" evidence="3">
    <location>
        <position position="177"/>
    </location>
</feature>
<feature type="modified residue" description="Phosphoserine" evidence="2">
    <location>
        <position position="319"/>
    </location>
</feature>
<feature type="modified residue" description="Phosphoserine" evidence="2">
    <location>
        <position position="322"/>
    </location>
</feature>
<feature type="modified residue" description="Phosphoserine" evidence="3">
    <location>
        <position position="384"/>
    </location>
</feature>
<feature type="modified residue" description="Phosphothreonine" evidence="12">
    <location>
        <position position="504"/>
    </location>
</feature>
<feature type="modified residue" description="Phosphoserine" evidence="12">
    <location>
        <position position="526"/>
    </location>
</feature>
<feature type="modified residue" description="Phosphoserine" evidence="12">
    <location>
        <position position="527"/>
    </location>
</feature>
<feature type="modified residue" description="Phosphoserine" evidence="12">
    <location>
        <position position="605"/>
    </location>
</feature>
<feature type="modified residue" description="Phosphoserine" evidence="9 10 11 12">
    <location>
        <position position="612"/>
    </location>
</feature>
<feature type="modified residue" description="Phosphothreonine" evidence="9 10 11 12">
    <location>
        <position position="616"/>
    </location>
</feature>
<feature type="modified residue" description="Phosphoserine" evidence="12">
    <location>
        <position position="644"/>
    </location>
</feature>
<feature type="modified residue" description="Phosphoserine" evidence="10 12">
    <location>
        <position position="667"/>
    </location>
</feature>
<feature type="modified residue" description="Phosphoserine" evidence="12">
    <location>
        <position position="787"/>
    </location>
</feature>
<feature type="modified residue" description="Phosphoserine" evidence="3">
    <location>
        <position position="874"/>
    </location>
</feature>
<feature type="modified residue" description="Phosphoserine" evidence="3">
    <location>
        <position position="877"/>
    </location>
</feature>
<feature type="modified residue" description="Phosphoserine" evidence="3">
    <location>
        <position position="878"/>
    </location>
</feature>
<feature type="modified residue" description="Phosphoserine" evidence="3">
    <location>
        <position position="891"/>
    </location>
</feature>
<feature type="modified residue" description="Phosphothreonine" evidence="3">
    <location>
        <position position="894"/>
    </location>
</feature>
<feature type="modified residue" description="Phosphoserine" evidence="10 12">
    <location>
        <position position="896"/>
    </location>
</feature>
<feature type="modified residue" description="Phosphoserine" evidence="3">
    <location>
        <position position="900"/>
    </location>
</feature>
<feature type="modified residue" description="Phosphoserine" evidence="12">
    <location>
        <position position="909"/>
    </location>
</feature>
<feature type="modified residue" description="Phosphoserine" evidence="12">
    <location>
        <position position="986"/>
    </location>
</feature>
<feature type="modified residue" description="Phosphoserine" evidence="3">
    <location>
        <position position="996"/>
    </location>
</feature>
<feature type="modified residue" description="Phosphoserine" evidence="3">
    <location>
        <position position="1004"/>
    </location>
</feature>
<feature type="modified residue" description="Phosphoserine" evidence="3">
    <location>
        <position position="1013"/>
    </location>
</feature>
<feature type="modified residue" description="Phosphoserine" evidence="2">
    <location>
        <position position="1019"/>
    </location>
</feature>
<feature type="modified residue" description="Phosphoserine" evidence="3">
    <location>
        <position position="1029"/>
    </location>
</feature>
<feature type="modified residue" description="Phosphoserine" evidence="10 12">
    <location>
        <position position="1069"/>
    </location>
</feature>
<feature type="modified residue" description="Phosphoserine" evidence="3">
    <location>
        <position position="1144"/>
    </location>
</feature>
<feature type="modified residue" description="Phosphoserine" evidence="3">
    <location>
        <position position="1146"/>
    </location>
</feature>
<feature type="modified residue" description="Phosphoserine" evidence="10">
    <location>
        <position position="1160"/>
    </location>
</feature>
<feature type="modified residue" description="Phosphoserine" evidence="12">
    <location>
        <position position="1172"/>
    </location>
</feature>
<feature type="modified residue" description="Phosphoserine" evidence="12">
    <location>
        <position position="1190"/>
    </location>
</feature>
<feature type="modified residue" description="Phosphoserine" evidence="12">
    <location>
        <position position="1200"/>
    </location>
</feature>
<feature type="modified residue" description="Phosphoserine" evidence="12">
    <location>
        <position position="1203"/>
    </location>
</feature>
<feature type="modified residue" description="Phosphoserine" evidence="3">
    <location>
        <position position="1209"/>
    </location>
</feature>
<feature type="modified residue" description="Phosphoserine" evidence="10 12">
    <location>
        <position position="1218"/>
    </location>
</feature>
<feature type="modified residue" description="Phosphoserine" evidence="2">
    <location>
        <position position="1221"/>
    </location>
</feature>
<feature type="modified residue" description="Phosphoserine" evidence="2">
    <location>
        <position position="1264"/>
    </location>
</feature>
<feature type="modified residue" description="Phosphoserine" evidence="9 12">
    <location>
        <position position="1326"/>
    </location>
</feature>
<feature type="modified residue" description="Phosphoserine" evidence="9">
    <location>
        <position position="1329"/>
    </location>
</feature>
<feature type="modified residue" description="Phosphoserine" evidence="3">
    <location>
        <position position="1544"/>
    </location>
</feature>
<feature type="modified residue" description="Phosphoserine" evidence="12">
    <location>
        <position position="1600"/>
    </location>
</feature>
<feature type="modified residue" description="Phosphoserine" evidence="12">
    <location>
        <position position="1626"/>
    </location>
</feature>
<feature type="modified residue" description="Phosphoserine" evidence="10">
    <location>
        <position position="1654"/>
    </location>
</feature>
<feature type="modified residue" description="Phosphoserine" evidence="10 12">
    <location>
        <position position="1675"/>
    </location>
</feature>
<feature type="modified residue" description="Phosphoserine" evidence="12">
    <location>
        <position position="1749"/>
    </location>
</feature>
<feature type="modified residue" description="Phosphoserine" evidence="12">
    <location>
        <position position="1762"/>
    </location>
</feature>
<feature type="modified residue" description="Phosphoserine" evidence="10 12">
    <location>
        <position position="1776"/>
    </location>
</feature>
<feature type="modified residue" description="Phosphoserine" evidence="10">
    <location>
        <position position="1791"/>
    </location>
</feature>
<feature type="modified residue" description="Phosphoserine" evidence="10 12">
    <location>
        <position position="1797"/>
    </location>
</feature>
<feature type="modified residue" description="Phosphoserine" evidence="10 12">
    <location>
        <position position="1801"/>
    </location>
</feature>
<feature type="modified residue" description="Phosphoserine" evidence="3">
    <location>
        <position position="1812"/>
    </location>
</feature>
<feature type="modified residue" description="Phosphoserine" evidence="12">
    <location>
        <position position="1818"/>
    </location>
</feature>
<feature type="modified residue" description="Phosphoserine" evidence="2">
    <location>
        <position position="1931"/>
    </location>
</feature>
<feature type="modified residue" description="Phosphothreonine" evidence="12">
    <location>
        <position position="1957"/>
    </location>
</feature>
<feature type="modified residue" description="Phosphoserine" evidence="8 9 10 12">
    <location>
        <position position="2022"/>
    </location>
</feature>
<feature type="modified residue" description="Phosphothreonine" evidence="2">
    <location>
        <position position="2058"/>
    </location>
</feature>
<feature type="modified residue" description="Phosphoserine" evidence="12">
    <location>
        <position position="2074"/>
    </location>
</feature>
<feature type="modified residue" description="Phosphoserine" evidence="10 12">
    <location>
        <position position="2104"/>
    </location>
</feature>
<feature type="modified residue" description="Phosphoserine" evidence="12">
    <location>
        <position position="2106"/>
    </location>
</feature>
<feature type="modified residue" description="Phosphoserine" evidence="3">
    <location>
        <position position="2108"/>
    </location>
</feature>
<feature type="modified residue" description="Phosphoserine" evidence="2">
    <location>
        <position position="2235"/>
    </location>
</feature>
<feature type="modified residue" description="Phosphoserine" evidence="2">
    <location>
        <position position="2252"/>
    </location>
</feature>
<feature type="modified residue" description="Phosphoserine" evidence="2">
    <location>
        <position position="2256"/>
    </location>
</feature>
<feature type="modified residue" description="Phosphoserine" evidence="2">
    <location>
        <position position="2259"/>
    </location>
</feature>
<feature type="modified residue" description="Phosphoserine" evidence="2">
    <location>
        <position position="2260"/>
    </location>
</feature>
<feature type="modified residue" description="Phosphoserine" evidence="10 12">
    <location>
        <position position="2449"/>
    </location>
</feature>
<feature type="modified residue" description="Phosphoserine" evidence="12">
    <location>
        <position position="2649"/>
    </location>
</feature>
<feature type="modified residue" description="Phosphoserine" evidence="12">
    <location>
        <position position="2664"/>
    </location>
</feature>
<feature type="splice variant" id="VSP_040240" description="In isoform 2." evidence="7">
    <original>Q</original>
    <variation>QSV</variation>
    <location>
        <position position="2752"/>
    </location>
</feature>
<feature type="sequence variant" id="VAR_039705" description="In dbSNP:rs2584695." evidence="6">
    <original>F</original>
    <variation>L</variation>
    <location>
        <position position="72"/>
    </location>
</feature>
<feature type="sequence variant" id="VAR_039706" description="In dbSNP:rs1060935." evidence="6">
    <original>A</original>
    <variation>S</variation>
    <location>
        <position position="335"/>
    </location>
</feature>
<feature type="sequence variant" id="VAR_039707" description="In dbSNP:rs1060936." evidence="6">
    <original>K</original>
    <variation>T</variation>
    <location>
        <position position="336"/>
    </location>
</feature>
<feature type="sequence variant" id="VAR_039708" description="In dbSNP:rs1060937." evidence="6">
    <original>A</original>
    <variation>S</variation>
    <location>
        <position position="353"/>
    </location>
</feature>
<feature type="sequence variant" id="VAR_039709" description="In dbSNP:rs1060938." evidence="6">
    <original>A</original>
    <variation>S</variation>
    <location>
        <position position="357"/>
    </location>
</feature>
<feature type="sequence variant" id="VAR_039710" description="In dbSNP:rs2602129." evidence="6">
    <original>K</original>
    <variation>Q</variation>
    <location>
        <position position="364"/>
    </location>
</feature>
<feature type="sequence variant" id="VAR_039711" description="In dbSNP:rs2584715.">
    <original>K</original>
    <variation>Q</variation>
    <location>
        <position position="485"/>
    </location>
</feature>
<feature type="sequence variant" id="VAR_039712" description="In dbSNP:rs3803337.">
    <original>T</original>
    <variation>A</variation>
    <location>
        <position position="830"/>
    </location>
</feature>
<feature type="sequence variant" id="VAR_039713" description="In dbSNP:rs8034794.">
    <original>N</original>
    <variation>S</variation>
    <location>
        <position position="1078"/>
    </location>
</feature>
<feature type="sequence variant" id="VAR_039714" description="In dbSNP:rs8036179.">
    <original>I</original>
    <variation>T</variation>
    <location>
        <position position="1102"/>
    </location>
</feature>
<feature type="sequence variant" id="VAR_039715" description="In dbSNP:rs3803335.">
    <original>R</original>
    <variation>H</variation>
    <location>
        <position position="1185"/>
    </location>
</feature>
<feature type="sequence variant" id="VAR_039716" description="In dbSNP:rs12912505.">
    <original>D</original>
    <variation>N</variation>
    <location>
        <position position="1245"/>
    </location>
</feature>
<feature type="sequence variant" id="VAR_039717" description="In dbSNP:rs2245715.">
    <original>D</original>
    <variation>N</variation>
    <location>
        <position position="1461"/>
    </location>
</feature>
<feature type="sequence variant" id="VAR_039718" description="In dbSNP:rs2584717.">
    <original>Q</original>
    <variation>H</variation>
    <location>
        <position position="1553"/>
    </location>
</feature>
<feature type="sequence variant" id="VAR_039719" description="In dbSNP:rs2584697.">
    <original>K</original>
    <variation>N</variation>
    <location>
        <position position="1605"/>
    </location>
</feature>
<feature type="sequence variant" id="VAR_039720" description="In dbSNP:rs1060943." evidence="6">
    <original>W</original>
    <variation>C</variation>
    <location>
        <position position="1650"/>
    </location>
</feature>
<feature type="sequence variant" id="VAR_039721" description="In dbSNP:rs1060946." evidence="6">
    <original>A</original>
    <variation>S</variation>
    <location>
        <position position="1690"/>
    </location>
</feature>
<feature type="sequence variant" id="VAR_039722" description="In dbSNP:rs2229014.">
    <original>P</original>
    <variation>A</variation>
    <location>
        <position position="1827"/>
    </location>
</feature>
<feature type="sequence variant" id="VAR_039723" description="In dbSNP:rs1060950." evidence="6">
    <original>A</original>
    <variation>P</variation>
    <location>
        <position position="1881"/>
    </location>
</feature>
<feature type="sequence variant" id="VAR_039724" description="In dbSNP:rs2584718." evidence="6">
    <original>A</original>
    <variation>V</variation>
    <location>
        <position position="1912"/>
    </location>
</feature>
<feature type="sequence variant" id="VAR_039725" description="In dbSNP:rs2584719." evidence="6">
    <original>S</original>
    <variation>R</variation>
    <location>
        <position position="1938"/>
    </location>
</feature>
<feature type="sequence variant" id="VAR_039726" description="In dbSNP:rs1060953.">
    <original>S</original>
    <variation>R</variation>
    <location>
        <position position="2056"/>
    </location>
</feature>
<feature type="sequence variant" id="VAR_039727" description="In dbSNP:rs1060955." evidence="6">
    <original>H</original>
    <variation>Y</variation>
    <location>
        <position position="2214"/>
    </location>
</feature>
<feature type="sequence variant" id="VAR_039728" description="In dbSNP:rs8026745.">
    <original>D</original>
    <variation>V</variation>
    <location>
        <position position="2327"/>
    </location>
</feature>
<feature type="sequence variant" id="VAR_059432" description="In dbSNP:rs8027254.">
    <original>T</original>
    <variation>I</variation>
    <location>
        <position position="2405"/>
    </location>
</feature>
<feature type="sequence variant" id="VAR_056122" description="In dbSNP:rs8028849.">
    <original>I</original>
    <variation>T</variation>
    <location>
        <position position="2461"/>
    </location>
</feature>
<feature type="sequence variant" id="VAR_059433" description="In dbSNP:rs8027916.">
    <original>D</original>
    <variation>N</variation>
    <location>
        <position position="2465"/>
    </location>
</feature>
<feature type="sequence conflict" description="In Ref. 5; CAA87104." evidence="7" ref="5">
    <original>VV</original>
    <variation>IP</variation>
    <location>
        <begin position="134"/>
        <end position="135"/>
    </location>
</feature>
<feature type="sequence conflict" description="In Ref. 5; CAA87104." evidence="7" ref="5">
    <original>A</original>
    <variation>G</variation>
    <location>
        <position position="249"/>
    </location>
</feature>
<feature type="sequence conflict" description="In Ref. 5; CAA87104." evidence="7" ref="5">
    <original>V</original>
    <variation>A</variation>
    <location>
        <position position="263"/>
    </location>
</feature>
<feature type="sequence conflict" description="In Ref. 4; AAD00355." evidence="7" ref="4">
    <original>Q</original>
    <variation>H</variation>
    <location>
        <position position="296"/>
    </location>
</feature>
<feature type="sequence conflict" description="In Ref. 5; CAA87104." evidence="7" ref="5">
    <original>S</original>
    <variation>G</variation>
    <location>
        <position position="311"/>
    </location>
</feature>
<feature type="sequence conflict" description="In Ref. 4; AAD00355." evidence="7" ref="4">
    <original>K</original>
    <variation>Q</variation>
    <location>
        <position position="324"/>
    </location>
</feature>
<feature type="sequence conflict" description="In Ref. 5; CAA87104." evidence="7" ref="5">
    <original>EKKDKE</original>
    <variation>KKKRNS</variation>
    <location>
        <begin position="414"/>
        <end position="419"/>
    </location>
</feature>
<feature type="sequence conflict" description="In Ref. 1; AAB41132/AAB41133." evidence="7" ref="1">
    <original>K</original>
    <variation>P</variation>
    <location>
        <position position="424"/>
    </location>
</feature>
<feature type="sequence conflict" description="In Ref. 4; AAD00355." evidence="7" ref="4">
    <original>E</original>
    <variation>D</variation>
    <location>
        <position position="426"/>
    </location>
</feature>
<feature type="sequence conflict" description="In Ref. 4; AAD00355." evidence="7" ref="4">
    <original>K</original>
    <variation>Q</variation>
    <location>
        <position position="431"/>
    </location>
</feature>
<feature type="sequence conflict" description="In Ref. 4; AAD00355." evidence="7" ref="4">
    <original>E</original>
    <variation>D</variation>
    <location>
        <position position="439"/>
    </location>
</feature>
<feature type="sequence conflict" description="In Ref. 4; AAD00355." evidence="7" ref="4">
    <original>K</original>
    <variation>R</variation>
    <location>
        <position position="444"/>
    </location>
</feature>
<feature type="sequence conflict" description="In Ref. 4; AAD00355." evidence="7" ref="4">
    <original>TK</original>
    <variation>SS</variation>
    <location>
        <begin position="452"/>
        <end position="453"/>
    </location>
</feature>
<feature type="sequence conflict" description="In Ref. 4; AAD00355." evidence="7" ref="4">
    <original>K</original>
    <variation>R</variation>
    <location>
        <position position="457"/>
    </location>
</feature>
<feature type="sequence conflict" description="In Ref. 1; AAB41132/AAB41133." evidence="7" ref="1">
    <original>Q</original>
    <variation>P</variation>
    <location>
        <position position="682"/>
    </location>
</feature>
<feature type="sequence conflict" description="In Ref. 1; AAB41132/AAB41133." evidence="7" ref="1">
    <original>Q</original>
    <variation>K</variation>
    <location>
        <position position="1025"/>
    </location>
</feature>
<feature type="sequence conflict" description="In Ref. 4; AAD00355." evidence="7" ref="4">
    <original>KYLPGAITSPD</original>
    <variation>EVLTWGDHQALN</variation>
    <location>
        <begin position="1303"/>
        <end position="1313"/>
    </location>
</feature>
<feature type="sequence conflict" description="In Ref. 4; AAD00355." evidence="7" ref="4">
    <location>
        <begin position="1335"/>
        <end position="1341"/>
    </location>
</feature>
<feature type="sequence conflict" description="In Ref. 4; AAD00355." evidence="7" ref="4">
    <original>Q</original>
    <variation>T</variation>
    <location>
        <position position="1368"/>
    </location>
</feature>
<feature type="sequence conflict" description="In Ref. 4; AAD00355." evidence="7" ref="4">
    <original>A</original>
    <variation>T</variation>
    <location>
        <position position="1470"/>
    </location>
</feature>
<feature type="sequence conflict" description="In Ref. 1; AAB41132/AAB41133." evidence="7" ref="1">
    <original>G</original>
    <variation>V</variation>
    <location>
        <position position="1714"/>
    </location>
</feature>
<feature type="sequence conflict" description="In Ref. 6; AAA81362." evidence="7" ref="6">
    <original>E</original>
    <variation>A</variation>
    <location>
        <position position="1869"/>
    </location>
</feature>
<feature type="sequence conflict" description="In Ref. 6; AAA81362." evidence="7" ref="6">
    <original>GTAEY</original>
    <variation>AHSRV</variation>
    <location>
        <begin position="1879"/>
        <end position="1883"/>
    </location>
</feature>
<feature type="sequence conflict" description="In Ref. 1; AAB41132/AAB41133." evidence="7" ref="1">
    <original>P</original>
    <variation>A</variation>
    <location>
        <position position="2118"/>
    </location>
</feature>
<feature type="sequence conflict" description="In Ref. 1; AAB41132/AAB41133." evidence="7" ref="1">
    <original>Q</original>
    <variation>E</variation>
    <location>
        <position position="2174"/>
    </location>
</feature>
<feature type="sequence conflict" description="In Ref. 1; AAB41132/AAB41133." evidence="7" ref="1">
    <original>A</original>
    <variation>D</variation>
    <location>
        <position position="2613"/>
    </location>
</feature>
<feature type="sequence conflict" description="In Ref. 1; AAB41132/AAB41133." evidence="7" ref="1">
    <original>A</original>
    <variation>V</variation>
    <location>
        <position position="2616"/>
    </location>
</feature>
<feature type="sequence conflict" description="In Ref. 1; AAB41132/AAB41133." evidence="7" ref="1">
    <original>P</original>
    <variation>S</variation>
    <location>
        <position position="2636"/>
    </location>
</feature>
<feature type="sequence conflict" description="In Ref. 1; AAB41132/AAB41133." evidence="7" ref="1">
    <original>A</original>
    <variation>V</variation>
    <location>
        <position position="2640"/>
    </location>
</feature>
<feature type="sequence conflict" description="In Ref. 1; AAB41132/AAB41133." evidence="7" ref="1">
    <original>P</original>
    <variation>S</variation>
    <location>
        <position position="2647"/>
    </location>
</feature>
<feature type="sequence conflict" description="In Ref. 1; AAB41132/AAB41133." evidence="7" ref="1">
    <original>C</original>
    <variation>W</variation>
    <location>
        <position position="2702"/>
    </location>
</feature>
<feature type="sequence conflict" description="In Ref. 1; AAB41132/AAB41133." evidence="7" ref="1">
    <original>S</original>
    <variation>V</variation>
    <location sequence="P78559-2">
        <position position="2753"/>
    </location>
</feature>
<feature type="sequence conflict" description="In Ref. 1; AAB41132/AAB41133." evidence="7" ref="1">
    <original>V</original>
    <variation>K</variation>
    <location sequence="P78559-2">
        <position position="2754"/>
    </location>
</feature>